<dbReference type="EMBL" id="CP000094">
    <property type="protein sequence ID" value="ABA72145.1"/>
    <property type="molecule type" value="Genomic_DNA"/>
</dbReference>
<dbReference type="RefSeq" id="WP_007952398.1">
    <property type="nucleotide sequence ID" value="NC_007492.2"/>
</dbReference>
<dbReference type="SMR" id="Q3KJB1"/>
<dbReference type="KEGG" id="pfo:Pfl01_0401"/>
<dbReference type="eggNOG" id="COG0254">
    <property type="taxonomic scope" value="Bacteria"/>
</dbReference>
<dbReference type="HOGENOM" id="CLU_114306_4_0_6"/>
<dbReference type="Proteomes" id="UP000002704">
    <property type="component" value="Chromosome"/>
</dbReference>
<dbReference type="GO" id="GO:1990904">
    <property type="term" value="C:ribonucleoprotein complex"/>
    <property type="evidence" value="ECO:0007669"/>
    <property type="project" value="UniProtKB-KW"/>
</dbReference>
<dbReference type="GO" id="GO:0005840">
    <property type="term" value="C:ribosome"/>
    <property type="evidence" value="ECO:0007669"/>
    <property type="project" value="UniProtKB-KW"/>
</dbReference>
<dbReference type="GO" id="GO:0046872">
    <property type="term" value="F:metal ion binding"/>
    <property type="evidence" value="ECO:0007669"/>
    <property type="project" value="UniProtKB-KW"/>
</dbReference>
<dbReference type="GO" id="GO:0019843">
    <property type="term" value="F:rRNA binding"/>
    <property type="evidence" value="ECO:0007669"/>
    <property type="project" value="UniProtKB-KW"/>
</dbReference>
<dbReference type="GO" id="GO:0003735">
    <property type="term" value="F:structural constituent of ribosome"/>
    <property type="evidence" value="ECO:0007669"/>
    <property type="project" value="InterPro"/>
</dbReference>
<dbReference type="GO" id="GO:0006412">
    <property type="term" value="P:translation"/>
    <property type="evidence" value="ECO:0007669"/>
    <property type="project" value="UniProtKB-UniRule"/>
</dbReference>
<dbReference type="Gene3D" id="4.10.830.30">
    <property type="entry name" value="Ribosomal protein L31"/>
    <property type="match status" value="1"/>
</dbReference>
<dbReference type="HAMAP" id="MF_00501">
    <property type="entry name" value="Ribosomal_bL31_1"/>
    <property type="match status" value="1"/>
</dbReference>
<dbReference type="InterPro" id="IPR034704">
    <property type="entry name" value="Ribosomal_bL28/bL31-like_sf"/>
</dbReference>
<dbReference type="InterPro" id="IPR002150">
    <property type="entry name" value="Ribosomal_bL31"/>
</dbReference>
<dbReference type="InterPro" id="IPR027491">
    <property type="entry name" value="Ribosomal_bL31_A"/>
</dbReference>
<dbReference type="InterPro" id="IPR042105">
    <property type="entry name" value="Ribosomal_bL31_sf"/>
</dbReference>
<dbReference type="NCBIfam" id="TIGR00105">
    <property type="entry name" value="L31"/>
    <property type="match status" value="1"/>
</dbReference>
<dbReference type="NCBIfam" id="NF000612">
    <property type="entry name" value="PRK00019.1"/>
    <property type="match status" value="1"/>
</dbReference>
<dbReference type="NCBIfam" id="NF001809">
    <property type="entry name" value="PRK00528.1"/>
    <property type="match status" value="1"/>
</dbReference>
<dbReference type="PANTHER" id="PTHR33280">
    <property type="entry name" value="50S RIBOSOMAL PROTEIN L31, CHLOROPLASTIC"/>
    <property type="match status" value="1"/>
</dbReference>
<dbReference type="PANTHER" id="PTHR33280:SF6">
    <property type="entry name" value="LARGE RIBOSOMAL SUBUNIT PROTEIN BL31A"/>
    <property type="match status" value="1"/>
</dbReference>
<dbReference type="Pfam" id="PF01197">
    <property type="entry name" value="Ribosomal_L31"/>
    <property type="match status" value="1"/>
</dbReference>
<dbReference type="PRINTS" id="PR01249">
    <property type="entry name" value="RIBOSOMALL31"/>
</dbReference>
<dbReference type="SUPFAM" id="SSF143800">
    <property type="entry name" value="L28p-like"/>
    <property type="match status" value="1"/>
</dbReference>
<dbReference type="PROSITE" id="PS01143">
    <property type="entry name" value="RIBOSOMAL_L31"/>
    <property type="match status" value="1"/>
</dbReference>
<keyword id="KW-0479">Metal-binding</keyword>
<keyword id="KW-0687">Ribonucleoprotein</keyword>
<keyword id="KW-0689">Ribosomal protein</keyword>
<keyword id="KW-0694">RNA-binding</keyword>
<keyword id="KW-0699">rRNA-binding</keyword>
<keyword id="KW-0862">Zinc</keyword>
<proteinExistence type="inferred from homology"/>
<accession>Q3KJB1</accession>
<organism>
    <name type="scientific">Pseudomonas fluorescens (strain Pf0-1)</name>
    <dbReference type="NCBI Taxonomy" id="205922"/>
    <lineage>
        <taxon>Bacteria</taxon>
        <taxon>Pseudomonadati</taxon>
        <taxon>Pseudomonadota</taxon>
        <taxon>Gammaproteobacteria</taxon>
        <taxon>Pseudomonadales</taxon>
        <taxon>Pseudomonadaceae</taxon>
        <taxon>Pseudomonas</taxon>
    </lineage>
</organism>
<comment type="function">
    <text evidence="1">Binds the 23S rRNA.</text>
</comment>
<comment type="cofactor">
    <cofactor evidence="1">
        <name>Zn(2+)</name>
        <dbReference type="ChEBI" id="CHEBI:29105"/>
    </cofactor>
    <text evidence="1">Binds 1 zinc ion per subunit.</text>
</comment>
<comment type="subunit">
    <text evidence="1">Part of the 50S ribosomal subunit.</text>
</comment>
<comment type="similarity">
    <text evidence="1">Belongs to the bacterial ribosomal protein bL31 family. Type A subfamily.</text>
</comment>
<evidence type="ECO:0000255" key="1">
    <source>
        <dbReference type="HAMAP-Rule" id="MF_00501"/>
    </source>
</evidence>
<evidence type="ECO:0000305" key="2"/>
<name>RL31_PSEPF</name>
<reference key="1">
    <citation type="journal article" date="2009" name="Genome Biol.">
        <title>Genomic and genetic analyses of diversity and plant interactions of Pseudomonas fluorescens.</title>
        <authorList>
            <person name="Silby M.W."/>
            <person name="Cerdeno-Tarraga A.M."/>
            <person name="Vernikos G.S."/>
            <person name="Giddens S.R."/>
            <person name="Jackson R.W."/>
            <person name="Preston G.M."/>
            <person name="Zhang X.-X."/>
            <person name="Moon C.D."/>
            <person name="Gehrig S.M."/>
            <person name="Godfrey S.A.C."/>
            <person name="Knight C.G."/>
            <person name="Malone J.G."/>
            <person name="Robinson Z."/>
            <person name="Spiers A.J."/>
            <person name="Harris S."/>
            <person name="Challis G.L."/>
            <person name="Yaxley A.M."/>
            <person name="Harris D."/>
            <person name="Seeger K."/>
            <person name="Murphy L."/>
            <person name="Rutter S."/>
            <person name="Squares R."/>
            <person name="Quail M.A."/>
            <person name="Saunders E."/>
            <person name="Mavromatis K."/>
            <person name="Brettin T.S."/>
            <person name="Bentley S.D."/>
            <person name="Hothersall J."/>
            <person name="Stephens E."/>
            <person name="Thomas C.M."/>
            <person name="Parkhill J."/>
            <person name="Levy S.B."/>
            <person name="Rainey P.B."/>
            <person name="Thomson N.R."/>
        </authorList>
    </citation>
    <scope>NUCLEOTIDE SEQUENCE [LARGE SCALE GENOMIC DNA]</scope>
    <source>
        <strain>Pf0-1</strain>
    </source>
</reference>
<feature type="chain" id="PRO_0000259211" description="Large ribosomal subunit protein bL31">
    <location>
        <begin position="1"/>
        <end position="72"/>
    </location>
</feature>
<feature type="binding site" evidence="1">
    <location>
        <position position="16"/>
    </location>
    <ligand>
        <name>Zn(2+)</name>
        <dbReference type="ChEBI" id="CHEBI:29105"/>
    </ligand>
</feature>
<feature type="binding site" evidence="1">
    <location>
        <position position="18"/>
    </location>
    <ligand>
        <name>Zn(2+)</name>
        <dbReference type="ChEBI" id="CHEBI:29105"/>
    </ligand>
</feature>
<feature type="binding site" evidence="1">
    <location>
        <position position="37"/>
    </location>
    <ligand>
        <name>Zn(2+)</name>
        <dbReference type="ChEBI" id="CHEBI:29105"/>
    </ligand>
</feature>
<feature type="binding site" evidence="1">
    <location>
        <position position="40"/>
    </location>
    <ligand>
        <name>Zn(2+)</name>
        <dbReference type="ChEBI" id="CHEBI:29105"/>
    </ligand>
</feature>
<gene>
    <name evidence="1" type="primary">rpmE</name>
    <name type="ordered locus">Pfl01_0401</name>
</gene>
<sequence length="72" mass="7875">MKADIHPNYPEVAVTCSCGNKFETRSTFGKALAIDVCNECHPFYTGKQKTLDTGGRVQKFADRFGAFGAKKA</sequence>
<protein>
    <recommendedName>
        <fullName evidence="1">Large ribosomal subunit protein bL31</fullName>
    </recommendedName>
    <alternativeName>
        <fullName evidence="2">50S ribosomal protein L31</fullName>
    </alternativeName>
</protein>